<keyword id="KW-0066">ATP synthesis</keyword>
<keyword id="KW-0067">ATP-binding</keyword>
<keyword id="KW-1003">Cell membrane</keyword>
<keyword id="KW-0139">CF(1)</keyword>
<keyword id="KW-0375">Hydrogen ion transport</keyword>
<keyword id="KW-0406">Ion transport</keyword>
<keyword id="KW-0472">Membrane</keyword>
<keyword id="KW-0547">Nucleotide-binding</keyword>
<keyword id="KW-1185">Reference proteome</keyword>
<keyword id="KW-1278">Translocase</keyword>
<keyword id="KW-0813">Transport</keyword>
<feature type="chain" id="PRO_0000144480" description="ATP synthase subunit beta">
    <location>
        <begin position="1"/>
        <end position="468"/>
    </location>
</feature>
<feature type="binding site" evidence="1">
    <location>
        <begin position="155"/>
        <end position="162"/>
    </location>
    <ligand>
        <name>ATP</name>
        <dbReference type="ChEBI" id="CHEBI:30616"/>
    </ligand>
</feature>
<feature type="sequence conflict" description="In Ref. 1; AAD13383." evidence="2" ref="1">
    <original>N</original>
    <variation>K</variation>
    <location>
        <position position="465"/>
    </location>
</feature>
<dbReference type="EC" id="7.1.2.2" evidence="1"/>
<dbReference type="EMBL" id="U31170">
    <property type="protein sequence ID" value="AAD13383.1"/>
    <property type="molecule type" value="Genomic_DNA"/>
</dbReference>
<dbReference type="EMBL" id="AE014133">
    <property type="protein sequence ID" value="AAN59178.1"/>
    <property type="molecule type" value="Genomic_DNA"/>
</dbReference>
<dbReference type="RefSeq" id="NP_721872.1">
    <property type="nucleotide sequence ID" value="NC_004350.2"/>
</dbReference>
<dbReference type="RefSeq" id="WP_002262940.1">
    <property type="nucleotide sequence ID" value="NC_004350.2"/>
</dbReference>
<dbReference type="SMR" id="P95789"/>
<dbReference type="STRING" id="210007.SMU_1528"/>
<dbReference type="KEGG" id="smu:SMU_1528"/>
<dbReference type="PATRIC" id="fig|210007.7.peg.1360"/>
<dbReference type="eggNOG" id="COG0055">
    <property type="taxonomic scope" value="Bacteria"/>
</dbReference>
<dbReference type="HOGENOM" id="CLU_022398_0_2_9"/>
<dbReference type="OrthoDB" id="9801639at2"/>
<dbReference type="PhylomeDB" id="P95789"/>
<dbReference type="SABIO-RK" id="P95789"/>
<dbReference type="Proteomes" id="UP000002512">
    <property type="component" value="Chromosome"/>
</dbReference>
<dbReference type="GO" id="GO:0005886">
    <property type="term" value="C:plasma membrane"/>
    <property type="evidence" value="ECO:0007669"/>
    <property type="project" value="UniProtKB-SubCell"/>
</dbReference>
<dbReference type="GO" id="GO:0045259">
    <property type="term" value="C:proton-transporting ATP synthase complex"/>
    <property type="evidence" value="ECO:0007669"/>
    <property type="project" value="UniProtKB-KW"/>
</dbReference>
<dbReference type="GO" id="GO:0005524">
    <property type="term" value="F:ATP binding"/>
    <property type="evidence" value="ECO:0007669"/>
    <property type="project" value="UniProtKB-UniRule"/>
</dbReference>
<dbReference type="GO" id="GO:0016887">
    <property type="term" value="F:ATP hydrolysis activity"/>
    <property type="evidence" value="ECO:0007669"/>
    <property type="project" value="InterPro"/>
</dbReference>
<dbReference type="GO" id="GO:0046933">
    <property type="term" value="F:proton-transporting ATP synthase activity, rotational mechanism"/>
    <property type="evidence" value="ECO:0007669"/>
    <property type="project" value="UniProtKB-UniRule"/>
</dbReference>
<dbReference type="CDD" id="cd18110">
    <property type="entry name" value="ATP-synt_F1_beta_C"/>
    <property type="match status" value="1"/>
</dbReference>
<dbReference type="CDD" id="cd18115">
    <property type="entry name" value="ATP-synt_F1_beta_N"/>
    <property type="match status" value="1"/>
</dbReference>
<dbReference type="CDD" id="cd01133">
    <property type="entry name" value="F1-ATPase_beta_CD"/>
    <property type="match status" value="1"/>
</dbReference>
<dbReference type="FunFam" id="1.10.1140.10:FF:000001">
    <property type="entry name" value="ATP synthase subunit beta"/>
    <property type="match status" value="1"/>
</dbReference>
<dbReference type="FunFam" id="2.40.10.170:FF:000005">
    <property type="entry name" value="ATP synthase subunit beta"/>
    <property type="match status" value="1"/>
</dbReference>
<dbReference type="FunFam" id="3.40.50.300:FF:000004">
    <property type="entry name" value="ATP synthase subunit beta"/>
    <property type="match status" value="1"/>
</dbReference>
<dbReference type="Gene3D" id="2.40.10.170">
    <property type="match status" value="1"/>
</dbReference>
<dbReference type="Gene3D" id="1.10.1140.10">
    <property type="entry name" value="Bovine Mitochondrial F1-atpase, Atp Synthase Beta Chain, Chain D, domain 3"/>
    <property type="match status" value="1"/>
</dbReference>
<dbReference type="Gene3D" id="3.40.50.300">
    <property type="entry name" value="P-loop containing nucleotide triphosphate hydrolases"/>
    <property type="match status" value="1"/>
</dbReference>
<dbReference type="HAMAP" id="MF_01347">
    <property type="entry name" value="ATP_synth_beta_bact"/>
    <property type="match status" value="1"/>
</dbReference>
<dbReference type="InterPro" id="IPR003593">
    <property type="entry name" value="AAA+_ATPase"/>
</dbReference>
<dbReference type="InterPro" id="IPR055190">
    <property type="entry name" value="ATP-synt_VA_C"/>
</dbReference>
<dbReference type="InterPro" id="IPR005722">
    <property type="entry name" value="ATP_synth_F1_bsu"/>
</dbReference>
<dbReference type="InterPro" id="IPR020003">
    <property type="entry name" value="ATPase_a/bsu_AS"/>
</dbReference>
<dbReference type="InterPro" id="IPR050053">
    <property type="entry name" value="ATPase_alpha/beta_chains"/>
</dbReference>
<dbReference type="InterPro" id="IPR004100">
    <property type="entry name" value="ATPase_F1/V1/A1_a/bsu_N"/>
</dbReference>
<dbReference type="InterPro" id="IPR036121">
    <property type="entry name" value="ATPase_F1/V1/A1_a/bsu_N_sf"/>
</dbReference>
<dbReference type="InterPro" id="IPR000194">
    <property type="entry name" value="ATPase_F1/V1/A1_a/bsu_nucl-bd"/>
</dbReference>
<dbReference type="InterPro" id="IPR024034">
    <property type="entry name" value="ATPase_F1/V1_b/a_C"/>
</dbReference>
<dbReference type="InterPro" id="IPR027417">
    <property type="entry name" value="P-loop_NTPase"/>
</dbReference>
<dbReference type="NCBIfam" id="TIGR01039">
    <property type="entry name" value="atpD"/>
    <property type="match status" value="1"/>
</dbReference>
<dbReference type="PANTHER" id="PTHR15184">
    <property type="entry name" value="ATP SYNTHASE"/>
    <property type="match status" value="1"/>
</dbReference>
<dbReference type="PANTHER" id="PTHR15184:SF71">
    <property type="entry name" value="ATP SYNTHASE SUBUNIT BETA, MITOCHONDRIAL"/>
    <property type="match status" value="1"/>
</dbReference>
<dbReference type="Pfam" id="PF00006">
    <property type="entry name" value="ATP-synt_ab"/>
    <property type="match status" value="1"/>
</dbReference>
<dbReference type="Pfam" id="PF02874">
    <property type="entry name" value="ATP-synt_ab_N"/>
    <property type="match status" value="1"/>
</dbReference>
<dbReference type="Pfam" id="PF22919">
    <property type="entry name" value="ATP-synt_VA_C"/>
    <property type="match status" value="1"/>
</dbReference>
<dbReference type="SMART" id="SM00382">
    <property type="entry name" value="AAA"/>
    <property type="match status" value="1"/>
</dbReference>
<dbReference type="SUPFAM" id="SSF47917">
    <property type="entry name" value="C-terminal domain of alpha and beta subunits of F1 ATP synthase"/>
    <property type="match status" value="1"/>
</dbReference>
<dbReference type="SUPFAM" id="SSF50615">
    <property type="entry name" value="N-terminal domain of alpha and beta subunits of F1 ATP synthase"/>
    <property type="match status" value="1"/>
</dbReference>
<dbReference type="SUPFAM" id="SSF52540">
    <property type="entry name" value="P-loop containing nucleoside triphosphate hydrolases"/>
    <property type="match status" value="1"/>
</dbReference>
<dbReference type="PROSITE" id="PS00152">
    <property type="entry name" value="ATPASE_ALPHA_BETA"/>
    <property type="match status" value="1"/>
</dbReference>
<accession>P95789</accession>
<gene>
    <name evidence="1" type="primary">atpD</name>
    <name evidence="1" type="synonym">atpB</name>
    <name type="ordered locus">SMU_1528</name>
</gene>
<proteinExistence type="inferred from homology"/>
<comment type="function">
    <text evidence="1">Produces ATP from ADP in the presence of a proton gradient across the membrane. The catalytic sites are hosted primarily by the beta subunits.</text>
</comment>
<comment type="catalytic activity">
    <reaction evidence="1">
        <text>ATP + H2O + 4 H(+)(in) = ADP + phosphate + 5 H(+)(out)</text>
        <dbReference type="Rhea" id="RHEA:57720"/>
        <dbReference type="ChEBI" id="CHEBI:15377"/>
        <dbReference type="ChEBI" id="CHEBI:15378"/>
        <dbReference type="ChEBI" id="CHEBI:30616"/>
        <dbReference type="ChEBI" id="CHEBI:43474"/>
        <dbReference type="ChEBI" id="CHEBI:456216"/>
        <dbReference type="EC" id="7.1.2.2"/>
    </reaction>
</comment>
<comment type="subunit">
    <text evidence="1">F-type ATPases have 2 components, CF(1) - the catalytic core - and CF(0) - the membrane proton channel. CF(1) has five subunits: alpha(3), beta(3), gamma(1), delta(1), epsilon(1). CF(0) has three main subunits: a(1), b(2) and c(9-12). The alpha and beta chains form an alternating ring which encloses part of the gamma chain. CF(1) is attached to CF(0) by a central stalk formed by the gamma and epsilon chains, while a peripheral stalk is formed by the delta and b chains.</text>
</comment>
<comment type="subcellular location">
    <subcellularLocation>
        <location evidence="1">Cell membrane</location>
        <topology evidence="1">Peripheral membrane protein</topology>
    </subcellularLocation>
</comment>
<comment type="similarity">
    <text evidence="1">Belongs to the ATPase alpha/beta chains family.</text>
</comment>
<organism>
    <name type="scientific">Streptococcus mutans serotype c (strain ATCC 700610 / UA159)</name>
    <dbReference type="NCBI Taxonomy" id="210007"/>
    <lineage>
        <taxon>Bacteria</taxon>
        <taxon>Bacillati</taxon>
        <taxon>Bacillota</taxon>
        <taxon>Bacilli</taxon>
        <taxon>Lactobacillales</taxon>
        <taxon>Streptococcaceae</taxon>
        <taxon>Streptococcus</taxon>
    </lineage>
</organism>
<evidence type="ECO:0000255" key="1">
    <source>
        <dbReference type="HAMAP-Rule" id="MF_01347"/>
    </source>
</evidence>
<evidence type="ECO:0000305" key="2"/>
<name>ATPB_STRMU</name>
<sequence length="468" mass="50976">MSTGKIAQVVGPVVDVAFATDDKLPEINNALVVYKDGDKSQRIVLEVALELGDGLVRTIAMESTDGLTRGLEVFDTGRAISVPVGKETLGRVFNVLGDTIDLDKPFAEDAERQPIHKKAPSFDDLSTSTEILETGIKVIDLLAPYLKGGKVGLFGGAGVGKTVLIQELIHNIAQEHGGISVFTGVGERTREGNDLYWEMKESGVIEKTAMVFGQMNEPPGARMRVALTGLTIAEYFRDVEGQDVLLFIDNIFRFTQAGSEVSALLGRMPSAVGYQPTLATEMGQLQERITSTKKGSVTSIQAIYVPADDYTDPAPATAFAHLDSTTNLERRLTQMGIYPAVDPLASSSRALSPEIVGQEHYDVATEVQHVLQRYRELQDIIAILGMDELSDEEKTLVGRARRIQFFLSQNFNVAEQFTGQPGSYVPVAETVRGFKEILEGKYDELPEDAFRSVGAIEDVVEKAKNMGV</sequence>
<reference key="1">
    <citation type="journal article" date="1996" name="Gene">
        <title>Cloning and nucleotide sequence analysis of the Streptococcus mutans membrane-bound, proton-translocating ATPase operon.</title>
        <authorList>
            <person name="Smith A.J."/>
            <person name="Quivey R.G."/>
            <person name="Faustoferri R.C."/>
        </authorList>
    </citation>
    <scope>NUCLEOTIDE SEQUENCE [GENOMIC DNA]</scope>
    <source>
        <strain>GS-5</strain>
    </source>
</reference>
<reference key="2">
    <citation type="submission" date="1999-02" db="EMBL/GenBank/DDBJ databases">
        <authorList>
            <person name="Smith A.J."/>
            <person name="Quivey R.G."/>
            <person name="Faustoferri R.C."/>
        </authorList>
    </citation>
    <scope>SEQUENCE REVISION TO C-TERMINUS</scope>
</reference>
<reference key="3">
    <citation type="journal article" date="2002" name="Proc. Natl. Acad. Sci. U.S.A.">
        <title>Genome sequence of Streptococcus mutans UA159, a cariogenic dental pathogen.</title>
        <authorList>
            <person name="Ajdic D.J."/>
            <person name="McShan W.M."/>
            <person name="McLaughlin R.E."/>
            <person name="Savic G."/>
            <person name="Chang J."/>
            <person name="Carson M.B."/>
            <person name="Primeaux C."/>
            <person name="Tian R."/>
            <person name="Kenton S."/>
            <person name="Jia H.G."/>
            <person name="Lin S.P."/>
            <person name="Qian Y."/>
            <person name="Li S."/>
            <person name="Zhu H."/>
            <person name="Najar F.Z."/>
            <person name="Lai H."/>
            <person name="White J."/>
            <person name="Roe B.A."/>
            <person name="Ferretti J.J."/>
        </authorList>
    </citation>
    <scope>NUCLEOTIDE SEQUENCE [LARGE SCALE GENOMIC DNA]</scope>
    <source>
        <strain>ATCC 700610 / UA159</strain>
    </source>
</reference>
<protein>
    <recommendedName>
        <fullName evidence="1">ATP synthase subunit beta</fullName>
        <ecNumber evidence="1">7.1.2.2</ecNumber>
    </recommendedName>
    <alternativeName>
        <fullName evidence="1">ATP synthase F1 sector subunit beta</fullName>
    </alternativeName>
    <alternativeName>
        <fullName evidence="1">F-ATPase subunit beta</fullName>
    </alternativeName>
</protein>